<protein>
    <recommendedName>
        <fullName>ATP synthase epsilon chain</fullName>
    </recommendedName>
    <alternativeName>
        <fullName>ATP synthase F1 sector epsilon subunit</fullName>
    </alternativeName>
    <alternativeName>
        <fullName>F-ATPase epsilon subunit</fullName>
    </alternativeName>
</protein>
<name>ATPE_SYNP1</name>
<accession>Q05375</accession>
<comment type="function">
    <text>Produces ATP from ADP in the presence of a proton gradient across the membrane.</text>
</comment>
<comment type="subunit">
    <text>F-type ATPases have 2 components, CF(1) - the catalytic core - and CF(0) - the membrane proton channel. CF(1) has five subunits: alpha(3), beta(3), gamma(1), delta(1), epsilon(1). CF(0) has three main subunits: a, b and c.</text>
</comment>
<comment type="subcellular location">
    <subcellularLocation>
        <location evidence="1">Cellular thylakoid membrane</location>
        <topology evidence="1">Peripheral membrane protein</topology>
    </subcellularLocation>
</comment>
<comment type="similarity">
    <text evidence="3">Belongs to the ATPase epsilon chain family.</text>
</comment>
<feature type="initiator methionine" description="Removed" evidence="2">
    <location>
        <position position="1"/>
    </location>
</feature>
<feature type="chain" id="PRO_0000188226" description="ATP synthase epsilon chain">
    <location>
        <begin position="2"/>
        <end position="138"/>
    </location>
</feature>
<gene>
    <name type="primary">atpC</name>
    <name type="synonym">atpE</name>
</gene>
<dbReference type="EMBL" id="X70432">
    <property type="protein sequence ID" value="CAA49883.1"/>
    <property type="molecule type" value="Genomic_DNA"/>
</dbReference>
<dbReference type="SMR" id="Q05375"/>
<dbReference type="GO" id="GO:0031676">
    <property type="term" value="C:plasma membrane-derived thylakoid membrane"/>
    <property type="evidence" value="ECO:0007669"/>
    <property type="project" value="UniProtKB-SubCell"/>
</dbReference>
<dbReference type="GO" id="GO:0045259">
    <property type="term" value="C:proton-transporting ATP synthase complex"/>
    <property type="evidence" value="ECO:0007669"/>
    <property type="project" value="UniProtKB-KW"/>
</dbReference>
<dbReference type="GO" id="GO:0005524">
    <property type="term" value="F:ATP binding"/>
    <property type="evidence" value="ECO:0007669"/>
    <property type="project" value="UniProtKB-UniRule"/>
</dbReference>
<dbReference type="GO" id="GO:0046933">
    <property type="term" value="F:proton-transporting ATP synthase activity, rotational mechanism"/>
    <property type="evidence" value="ECO:0007669"/>
    <property type="project" value="UniProtKB-UniRule"/>
</dbReference>
<dbReference type="CDD" id="cd12152">
    <property type="entry name" value="F1-ATPase_delta"/>
    <property type="match status" value="1"/>
</dbReference>
<dbReference type="Gene3D" id="2.60.15.10">
    <property type="entry name" value="F0F1 ATP synthase delta/epsilon subunit, N-terminal"/>
    <property type="match status" value="1"/>
</dbReference>
<dbReference type="Gene3D" id="1.10.287.540">
    <property type="entry name" value="Helix hairpin bin"/>
    <property type="match status" value="1"/>
</dbReference>
<dbReference type="HAMAP" id="MF_00530">
    <property type="entry name" value="ATP_synth_epsil_bac"/>
    <property type="match status" value="1"/>
</dbReference>
<dbReference type="InterPro" id="IPR001469">
    <property type="entry name" value="ATP_synth_F1_dsu/esu"/>
</dbReference>
<dbReference type="InterPro" id="IPR020546">
    <property type="entry name" value="ATP_synth_F1_dsu/esu_N"/>
</dbReference>
<dbReference type="InterPro" id="IPR020547">
    <property type="entry name" value="ATP_synth_F1_esu_C"/>
</dbReference>
<dbReference type="InterPro" id="IPR036771">
    <property type="entry name" value="ATPsynth_dsu/esu_N"/>
</dbReference>
<dbReference type="NCBIfam" id="TIGR01216">
    <property type="entry name" value="ATP_synt_epsi"/>
    <property type="match status" value="1"/>
</dbReference>
<dbReference type="NCBIfam" id="NF009977">
    <property type="entry name" value="PRK13442.1"/>
    <property type="match status" value="1"/>
</dbReference>
<dbReference type="PANTHER" id="PTHR13822">
    <property type="entry name" value="ATP SYNTHASE DELTA/EPSILON CHAIN"/>
    <property type="match status" value="1"/>
</dbReference>
<dbReference type="PANTHER" id="PTHR13822:SF10">
    <property type="entry name" value="ATP SYNTHASE EPSILON CHAIN, CHLOROPLASTIC"/>
    <property type="match status" value="1"/>
</dbReference>
<dbReference type="Pfam" id="PF00401">
    <property type="entry name" value="ATP-synt_DE"/>
    <property type="match status" value="1"/>
</dbReference>
<dbReference type="Pfam" id="PF02823">
    <property type="entry name" value="ATP-synt_DE_N"/>
    <property type="match status" value="1"/>
</dbReference>
<dbReference type="SUPFAM" id="SSF51344">
    <property type="entry name" value="Epsilon subunit of F1F0-ATP synthase N-terminal domain"/>
    <property type="match status" value="1"/>
</dbReference>
<evidence type="ECO:0000250" key="1"/>
<evidence type="ECO:0000269" key="2">
    <source>
    </source>
</evidence>
<evidence type="ECO:0000305" key="3"/>
<keyword id="KW-0066">ATP synthesis</keyword>
<keyword id="KW-0139">CF(1)</keyword>
<keyword id="KW-0903">Direct protein sequencing</keyword>
<keyword id="KW-0375">Hydrogen ion transport</keyword>
<keyword id="KW-0406">Ion transport</keyword>
<keyword id="KW-0472">Membrane</keyword>
<keyword id="KW-0793">Thylakoid</keyword>
<keyword id="KW-0813">Transport</keyword>
<reference key="1">
    <citation type="journal article" date="1993" name="Biochem. J.">
        <title>Organization and sequences of genes for the subunits of ATP synthase in the thermophilic cyanobacterium Synechococcus 6716.</title>
        <authorList>
            <person name="van Walraven H.S."/>
            <person name="Lutter R."/>
            <person name="Walker J.E."/>
        </authorList>
    </citation>
    <scope>NUCLEOTIDE SEQUENCE [GENOMIC DNA]</scope>
    <scope>PROTEIN SEQUENCE OF 2-12</scope>
</reference>
<organism>
    <name type="scientific">Synechococcus sp. (strain PCC 6716)</name>
    <dbReference type="NCBI Taxonomy" id="32048"/>
    <lineage>
        <taxon>Bacteria</taxon>
        <taxon>Bacillati</taxon>
        <taxon>Cyanobacteriota</taxon>
        <taxon>Cyanophyceae</taxon>
        <taxon>Synechococcales</taxon>
        <taxon>Synechococcaceae</taxon>
        <taxon>Synechococcus</taxon>
    </lineage>
</organism>
<proteinExistence type="evidence at protein level"/>
<sequence length="138" mass="14752">MVMTVRVIAPDKTVWDAPAEEVILPSTTGQLGILSNHAPLLTALETGVMRVRQEREWVAIALMGGFAEVENNEVTVLVNAAERGDTIDLETAKREFSEAQAAVAKAAQSGSKQAQIQAAQAFRRARARLQAAGGVVEI</sequence>